<reference key="1">
    <citation type="journal article" date="2008" name="Genome Biol.">
        <title>The complete genome, comparative and functional analysis of Stenotrophomonas maltophilia reveals an organism heavily shielded by drug resistance determinants.</title>
        <authorList>
            <person name="Crossman L.C."/>
            <person name="Gould V.C."/>
            <person name="Dow J.M."/>
            <person name="Vernikos G.S."/>
            <person name="Okazaki A."/>
            <person name="Sebaihia M."/>
            <person name="Saunders D."/>
            <person name="Arrowsmith C."/>
            <person name="Carver T."/>
            <person name="Peters N."/>
            <person name="Adlem E."/>
            <person name="Kerhornou A."/>
            <person name="Lord A."/>
            <person name="Murphy L."/>
            <person name="Seeger K."/>
            <person name="Squares R."/>
            <person name="Rutter S."/>
            <person name="Quail M.A."/>
            <person name="Rajandream M.A."/>
            <person name="Harris D."/>
            <person name="Churcher C."/>
            <person name="Bentley S.D."/>
            <person name="Parkhill J."/>
            <person name="Thomson N.R."/>
            <person name="Avison M.B."/>
        </authorList>
    </citation>
    <scope>NUCLEOTIDE SEQUENCE [LARGE SCALE GENOMIC DNA]</scope>
    <source>
        <strain>K279a</strain>
    </source>
</reference>
<keyword id="KW-1185">Reference proteome</keyword>
<proteinExistence type="inferred from homology"/>
<name>APAG_STRMK</name>
<gene>
    <name evidence="1" type="primary">apaG</name>
    <name type="ordered locus">Smlt0817</name>
</gene>
<accession>B2FPG4</accession>
<protein>
    <recommendedName>
        <fullName evidence="1">Protein ApaG</fullName>
    </recommendedName>
</protein>
<dbReference type="EMBL" id="AM743169">
    <property type="protein sequence ID" value="CAQ44393.1"/>
    <property type="molecule type" value="Genomic_DNA"/>
</dbReference>
<dbReference type="RefSeq" id="WP_005412297.1">
    <property type="nucleotide sequence ID" value="NC_010943.1"/>
</dbReference>
<dbReference type="SMR" id="B2FPG4"/>
<dbReference type="EnsemblBacteria" id="CAQ44393">
    <property type="protein sequence ID" value="CAQ44393"/>
    <property type="gene ID" value="Smlt0817"/>
</dbReference>
<dbReference type="GeneID" id="93831848"/>
<dbReference type="KEGG" id="sml:Smlt0817"/>
<dbReference type="eggNOG" id="COG2967">
    <property type="taxonomic scope" value="Bacteria"/>
</dbReference>
<dbReference type="HOGENOM" id="CLU_128074_1_0_6"/>
<dbReference type="Proteomes" id="UP000008840">
    <property type="component" value="Chromosome"/>
</dbReference>
<dbReference type="GO" id="GO:0070987">
    <property type="term" value="P:error-free translesion synthesis"/>
    <property type="evidence" value="ECO:0007669"/>
    <property type="project" value="TreeGrafter"/>
</dbReference>
<dbReference type="Gene3D" id="2.60.40.1470">
    <property type="entry name" value="ApaG domain"/>
    <property type="match status" value="1"/>
</dbReference>
<dbReference type="HAMAP" id="MF_00791">
    <property type="entry name" value="ApaG"/>
    <property type="match status" value="1"/>
</dbReference>
<dbReference type="InterPro" id="IPR007474">
    <property type="entry name" value="ApaG_domain"/>
</dbReference>
<dbReference type="InterPro" id="IPR036767">
    <property type="entry name" value="ApaG_sf"/>
</dbReference>
<dbReference type="InterPro" id="IPR023065">
    <property type="entry name" value="Uncharacterised_ApaG"/>
</dbReference>
<dbReference type="NCBIfam" id="NF003967">
    <property type="entry name" value="PRK05461.1"/>
    <property type="match status" value="1"/>
</dbReference>
<dbReference type="PANTHER" id="PTHR14289">
    <property type="entry name" value="F-BOX ONLY PROTEIN 3"/>
    <property type="match status" value="1"/>
</dbReference>
<dbReference type="PANTHER" id="PTHR14289:SF16">
    <property type="entry name" value="POLYMERASE DELTA-INTERACTING PROTEIN 2"/>
    <property type="match status" value="1"/>
</dbReference>
<dbReference type="Pfam" id="PF04379">
    <property type="entry name" value="DUF525"/>
    <property type="match status" value="1"/>
</dbReference>
<dbReference type="SUPFAM" id="SSF110069">
    <property type="entry name" value="ApaG-like"/>
    <property type="match status" value="1"/>
</dbReference>
<dbReference type="PROSITE" id="PS51087">
    <property type="entry name" value="APAG"/>
    <property type="match status" value="1"/>
</dbReference>
<organism>
    <name type="scientific">Stenotrophomonas maltophilia (strain K279a)</name>
    <dbReference type="NCBI Taxonomy" id="522373"/>
    <lineage>
        <taxon>Bacteria</taxon>
        <taxon>Pseudomonadati</taxon>
        <taxon>Pseudomonadota</taxon>
        <taxon>Gammaproteobacteria</taxon>
        <taxon>Lysobacterales</taxon>
        <taxon>Lysobacteraceae</taxon>
        <taxon>Stenotrophomonas</taxon>
        <taxon>Stenotrophomonas maltophilia group</taxon>
    </lineage>
</organism>
<evidence type="ECO:0000255" key="1">
    <source>
        <dbReference type="HAMAP-Rule" id="MF_00791"/>
    </source>
</evidence>
<sequence>MEDADVYAISVEVAPRFLDDQSAPEDGRYAFAYTIRIHNQGRVAARLVARHWRITDANGRVEHVDGDGVIGEQPRLRPGEDFHYTSGVMLGTDHGTMQGHYDMVADDGTEFAAPVAPFVLAIPRTLH</sequence>
<feature type="chain" id="PRO_1000133818" description="Protein ApaG">
    <location>
        <begin position="1"/>
        <end position="127"/>
    </location>
</feature>
<feature type="domain" description="ApaG" evidence="1">
    <location>
        <begin position="3"/>
        <end position="127"/>
    </location>
</feature>